<sequence length="167" mass="18827">MASGVTVNDEVIKVFNEMKVRKSSTPEEIKKRKKAVLFCLSPDKKEIIVEETKQILVGDIGEAVPDPYRTFVNLLPLDDCRYGLYDATYETKESKKEDLVFIFWAPDNAPLKSKMIYASSKDAIKKKFTGIKHEWQVNGLDDIKDRCTLADKLGGNVVVSLEGVPLK</sequence>
<comment type="function">
    <text evidence="1">Controls reversibly actin polymerization and depolymerization in a pH-sensitive manner. It has the ability to bind G- and F-actin in a 1:1 ratio of cofilin to actin. It is the major component of intranuclear and cytoplasmic actin rods (By similarity).</text>
</comment>
<comment type="subcellular location">
    <subcellularLocation>
        <location evidence="1">Nucleus matrix</location>
    </subcellularLocation>
    <subcellularLocation>
        <location evidence="1">Cytoplasm</location>
        <location evidence="1">Cytoskeleton</location>
    </subcellularLocation>
</comment>
<comment type="similarity">
    <text evidence="4">Belongs to the actin-binding proteins ADF family.</text>
</comment>
<accession>Q5U4Y2</accession>
<gene>
    <name type="primary">cfl2</name>
</gene>
<evidence type="ECO:0000250" key="1"/>
<evidence type="ECO:0000255" key="2"/>
<evidence type="ECO:0000255" key="3">
    <source>
        <dbReference type="PROSITE-ProRule" id="PRU00599"/>
    </source>
</evidence>
<evidence type="ECO:0000305" key="4"/>
<dbReference type="EMBL" id="BC084909">
    <property type="protein sequence ID" value="AAH84909.1"/>
    <property type="molecule type" value="mRNA"/>
</dbReference>
<dbReference type="RefSeq" id="NP_001011156.1">
    <property type="nucleotide sequence ID" value="NM_001011156.2"/>
</dbReference>
<dbReference type="SMR" id="Q5U4Y2"/>
<dbReference type="FunCoup" id="Q5U4Y2">
    <property type="interactions" value="843"/>
</dbReference>
<dbReference type="STRING" id="8364.ENSXETP00000051183"/>
<dbReference type="PaxDb" id="8364-ENSXETP00000026893"/>
<dbReference type="GeneID" id="496574"/>
<dbReference type="KEGG" id="xtr:496574"/>
<dbReference type="AGR" id="Xenbase:XB-GENE-1002956"/>
<dbReference type="CTD" id="1073"/>
<dbReference type="Xenbase" id="XB-GENE-1002956">
    <property type="gene designation" value="cfl2"/>
</dbReference>
<dbReference type="eggNOG" id="KOG1735">
    <property type="taxonomic scope" value="Eukaryota"/>
</dbReference>
<dbReference type="HOGENOM" id="CLU_094004_0_0_1"/>
<dbReference type="InParanoid" id="Q5U4Y2"/>
<dbReference type="OMA" id="QCRFAVY"/>
<dbReference type="OrthoDB" id="10249245at2759"/>
<dbReference type="PhylomeDB" id="Q5U4Y2"/>
<dbReference type="TreeFam" id="TF328601"/>
<dbReference type="Proteomes" id="UP000008143">
    <property type="component" value="Chromosome 8"/>
</dbReference>
<dbReference type="Bgee" id="ENSXETG00000012301">
    <property type="expression patterns" value="Expressed in heart and 10 other cell types or tissues"/>
</dbReference>
<dbReference type="ExpressionAtlas" id="Q5U4Y2">
    <property type="expression patterns" value="baseline"/>
</dbReference>
<dbReference type="GO" id="GO:0015629">
    <property type="term" value="C:actin cytoskeleton"/>
    <property type="evidence" value="ECO:0007669"/>
    <property type="project" value="InterPro"/>
</dbReference>
<dbReference type="GO" id="GO:0005737">
    <property type="term" value="C:cytoplasm"/>
    <property type="evidence" value="ECO:0007669"/>
    <property type="project" value="UniProtKB-KW"/>
</dbReference>
<dbReference type="GO" id="GO:0016363">
    <property type="term" value="C:nuclear matrix"/>
    <property type="evidence" value="ECO:0007669"/>
    <property type="project" value="UniProtKB-SubCell"/>
</dbReference>
<dbReference type="GO" id="GO:0051015">
    <property type="term" value="F:actin filament binding"/>
    <property type="evidence" value="ECO:0000250"/>
    <property type="project" value="UniProtKB"/>
</dbReference>
<dbReference type="GO" id="GO:0030042">
    <property type="term" value="P:actin filament depolymerization"/>
    <property type="evidence" value="ECO:0000250"/>
    <property type="project" value="UniProtKB"/>
</dbReference>
<dbReference type="CDD" id="cd11286">
    <property type="entry name" value="ADF_cofilin_like"/>
    <property type="match status" value="1"/>
</dbReference>
<dbReference type="FunFam" id="3.40.20.10:FF:000010">
    <property type="entry name" value="Putative destrin"/>
    <property type="match status" value="1"/>
</dbReference>
<dbReference type="Gene3D" id="3.40.20.10">
    <property type="entry name" value="Severin"/>
    <property type="match status" value="1"/>
</dbReference>
<dbReference type="InterPro" id="IPR002108">
    <property type="entry name" value="ADF-H"/>
</dbReference>
<dbReference type="InterPro" id="IPR029006">
    <property type="entry name" value="ADF-H/Gelsolin-like_dom_sf"/>
</dbReference>
<dbReference type="InterPro" id="IPR017904">
    <property type="entry name" value="ADF/Cofilin"/>
</dbReference>
<dbReference type="PANTHER" id="PTHR11913">
    <property type="entry name" value="COFILIN-RELATED"/>
    <property type="match status" value="1"/>
</dbReference>
<dbReference type="Pfam" id="PF00241">
    <property type="entry name" value="Cofilin_ADF"/>
    <property type="match status" value="1"/>
</dbReference>
<dbReference type="PRINTS" id="PR00006">
    <property type="entry name" value="COFILIN"/>
</dbReference>
<dbReference type="SMART" id="SM00102">
    <property type="entry name" value="ADF"/>
    <property type="match status" value="1"/>
</dbReference>
<dbReference type="SUPFAM" id="SSF55753">
    <property type="entry name" value="Actin depolymerizing proteins"/>
    <property type="match status" value="1"/>
</dbReference>
<dbReference type="PROSITE" id="PS51263">
    <property type="entry name" value="ADF_H"/>
    <property type="match status" value="1"/>
</dbReference>
<name>COF2_XENTR</name>
<reference key="1">
    <citation type="submission" date="2004-10" db="EMBL/GenBank/DDBJ databases">
        <authorList>
            <consortium name="NIH - Xenopus Gene Collection (XGC) project"/>
        </authorList>
    </citation>
    <scope>NUCLEOTIDE SEQUENCE [LARGE SCALE MRNA]</scope>
    <source>
        <tissue>Embryo</tissue>
    </source>
</reference>
<protein>
    <recommendedName>
        <fullName>Cofilin-2</fullName>
    </recommendedName>
</protein>
<feature type="chain" id="PRO_0000214912" description="Cofilin-2">
    <location>
        <begin position="1"/>
        <end position="167"/>
    </location>
</feature>
<feature type="domain" description="ADF-H" evidence="3">
    <location>
        <begin position="4"/>
        <end position="153"/>
    </location>
</feature>
<feature type="short sequence motif" description="Nuclear localization signal" evidence="2">
    <location>
        <begin position="30"/>
        <end position="34"/>
    </location>
</feature>
<keyword id="KW-0009">Actin-binding</keyword>
<keyword id="KW-0963">Cytoplasm</keyword>
<keyword id="KW-0206">Cytoskeleton</keyword>
<keyword id="KW-0539">Nucleus</keyword>
<keyword id="KW-1185">Reference proteome</keyword>
<proteinExistence type="evidence at transcript level"/>
<organism>
    <name type="scientific">Xenopus tropicalis</name>
    <name type="common">Western clawed frog</name>
    <name type="synonym">Silurana tropicalis</name>
    <dbReference type="NCBI Taxonomy" id="8364"/>
    <lineage>
        <taxon>Eukaryota</taxon>
        <taxon>Metazoa</taxon>
        <taxon>Chordata</taxon>
        <taxon>Craniata</taxon>
        <taxon>Vertebrata</taxon>
        <taxon>Euteleostomi</taxon>
        <taxon>Amphibia</taxon>
        <taxon>Batrachia</taxon>
        <taxon>Anura</taxon>
        <taxon>Pipoidea</taxon>
        <taxon>Pipidae</taxon>
        <taxon>Xenopodinae</taxon>
        <taxon>Xenopus</taxon>
        <taxon>Silurana</taxon>
    </lineage>
</organism>